<name>CAPSD_AMVST</name>
<organism>
    <name type="scientific">Alfalfa mosaic virus (strain Strasbourg)</name>
    <dbReference type="NCBI Taxonomy" id="12324"/>
    <lineage>
        <taxon>Viruses</taxon>
        <taxon>Riboviria</taxon>
        <taxon>Orthornavirae</taxon>
        <taxon>Kitrinoviricota</taxon>
        <taxon>Alsuviricetes</taxon>
        <taxon>Martellivirales</taxon>
        <taxon>Bromoviridae</taxon>
        <taxon>Alfamovirus</taxon>
        <taxon>Alfalfa mosaic virus</taxon>
    </lineage>
</organism>
<keyword id="KW-0007">Acetylation</keyword>
<keyword id="KW-0167">Capsid protein</keyword>
<keyword id="KW-0903">Direct protein sequencing</keyword>
<keyword id="KW-0687">Ribonucleoprotein</keyword>
<keyword id="KW-0694">RNA-binding</keyword>
<keyword id="KW-1142">T=3 icosahedral capsid protein</keyword>
<keyword id="KW-0543">Viral nucleoprotein</keyword>
<keyword id="KW-0946">Virion</keyword>
<reference key="1">
    <citation type="journal article" date="1984" name="Biochimie">
        <title>Complete nucleotide sequence of RNA 3 from alfalfa mosaic virus, strain S.</title>
        <authorList>
            <person name="Ravelonandro M."/>
            <person name="Pinck M."/>
            <person name="Pinck L."/>
        </authorList>
    </citation>
    <scope>NUCLEOTIDE SEQUENCE [GENOMIC RNA]</scope>
</reference>
<reference key="2">
    <citation type="journal article" date="1977" name="Biochim. Biophys. Acta">
        <title>Determination of the primary structure of alfalfa mosaic virus (strain S) coat protein. II. Complete sequence of the protein.</title>
        <authorList>
            <person name="Collot D."/>
            <person name="Peter R."/>
            <person name="Das B."/>
            <person name="Wolff B."/>
            <person name="Duranton H."/>
        </authorList>
    </citation>
    <scope>PROTEIN SEQUENCE OF 2-218</scope>
    <scope>ACETYLATION AT SER-2</scope>
</reference>
<dbReference type="EMBL" id="X00819">
    <property type="protein sequence ID" value="CAA25393.1"/>
    <property type="molecule type" value="Genomic_RNA"/>
</dbReference>
<dbReference type="PIR" id="A04200">
    <property type="entry name" value="VCBV2S"/>
</dbReference>
<dbReference type="PIR" id="A90622">
    <property type="entry name" value="VCFMS"/>
</dbReference>
<dbReference type="SMR" id="P03590"/>
<dbReference type="iPTMnet" id="P03590"/>
<dbReference type="GO" id="GO:1990904">
    <property type="term" value="C:ribonucleoprotein complex"/>
    <property type="evidence" value="ECO:0007669"/>
    <property type="project" value="UniProtKB-KW"/>
</dbReference>
<dbReference type="GO" id="GO:0039617">
    <property type="term" value="C:T=3 icosahedral viral capsid"/>
    <property type="evidence" value="ECO:0007669"/>
    <property type="project" value="UniProtKB-KW"/>
</dbReference>
<dbReference type="GO" id="GO:0019013">
    <property type="term" value="C:viral nucleocapsid"/>
    <property type="evidence" value="ECO:0007669"/>
    <property type="project" value="UniProtKB-KW"/>
</dbReference>
<dbReference type="GO" id="GO:0003723">
    <property type="term" value="F:RNA binding"/>
    <property type="evidence" value="ECO:0007669"/>
    <property type="project" value="UniProtKB-KW"/>
</dbReference>
<dbReference type="InterPro" id="IPR002681">
    <property type="entry name" value="Coat_Ilarvirus"/>
</dbReference>
<dbReference type="Pfam" id="PF01787">
    <property type="entry name" value="Ilar_coat"/>
    <property type="match status" value="1"/>
</dbReference>
<evidence type="ECO:0000250" key="1"/>
<evidence type="ECO:0000256" key="2">
    <source>
        <dbReference type="SAM" id="MobiDB-lite"/>
    </source>
</evidence>
<evidence type="ECO:0000269" key="3">
    <source>
    </source>
</evidence>
<evidence type="ECO:0000305" key="4"/>
<accession>P03590</accession>
<accession>P03592</accession>
<gene>
    <name type="ORF">ORF3b</name>
</gene>
<organismHost>
    <name type="scientific">Apium graveolens</name>
    <name type="common">Celery</name>
    <dbReference type="NCBI Taxonomy" id="4045"/>
</organismHost>
<organismHost>
    <name type="scientific">Astragalus glycyphyllos</name>
    <name type="common">Wild liquorice</name>
    <dbReference type="NCBI Taxonomy" id="83862"/>
</organismHost>
<organismHost>
    <name type="scientific">Capsicum annuum</name>
    <name type="common">Capsicum pepper</name>
    <dbReference type="NCBI Taxonomy" id="4072"/>
</organismHost>
<organismHost>
    <name type="scientific">Caryopteris incana</name>
    <dbReference type="NCBI Taxonomy" id="41386"/>
</organismHost>
<organismHost>
    <name type="scientific">Cicer arietinum</name>
    <name type="common">Chickpea</name>
    <name type="synonym">Garbanzo</name>
    <dbReference type="NCBI Taxonomy" id="3827"/>
</organismHost>
<organismHost>
    <name type="scientific">Glycine max</name>
    <name type="common">Soybean</name>
    <name type="synonym">Glycine hispida</name>
    <dbReference type="NCBI Taxonomy" id="3847"/>
</organismHost>
<organismHost>
    <name type="scientific">Lablab purpureus</name>
    <name type="common">Hyacinth bean</name>
    <name type="synonym">Dolichos lablab</name>
    <dbReference type="NCBI Taxonomy" id="35936"/>
</organismHost>
<organismHost>
    <name type="scientific">Lactuca sativa</name>
    <name type="common">Garden lettuce</name>
    <dbReference type="NCBI Taxonomy" id="4236"/>
</organismHost>
<organismHost>
    <name type="scientific">Lens culinaris</name>
    <name type="common">Lentil</name>
    <name type="synonym">Cicer lens</name>
    <dbReference type="NCBI Taxonomy" id="3864"/>
</organismHost>
<organismHost>
    <name type="scientific">Lupinus</name>
    <dbReference type="NCBI Taxonomy" id="3869"/>
</organismHost>
<organismHost>
    <name type="scientific">Malva parviflora</name>
    <name type="common">Little mallow</name>
    <name type="synonym">Cheeseweed mallow</name>
    <dbReference type="NCBI Taxonomy" id="145753"/>
</organismHost>
<organismHost>
    <name type="scientific">Medicago sativa</name>
    <name type="common">Alfalfa</name>
    <dbReference type="NCBI Taxonomy" id="3879"/>
</organismHost>
<organismHost>
    <name type="scientific">Nicotiana tabacum</name>
    <name type="common">Common tobacco</name>
    <dbReference type="NCBI Taxonomy" id="4097"/>
</organismHost>
<organismHost>
    <name type="scientific">Phaseolus vulgaris</name>
    <name type="common">Kidney bean</name>
    <name type="synonym">French bean</name>
    <dbReference type="NCBI Taxonomy" id="3885"/>
</organismHost>
<organismHost>
    <name type="scientific">Philadelphus</name>
    <dbReference type="NCBI Taxonomy" id="23113"/>
</organismHost>
<organismHost>
    <name type="scientific">Pisum sativum</name>
    <name type="common">Garden pea</name>
    <name type="synonym">Lathyrus oleraceus</name>
    <dbReference type="NCBI Taxonomy" id="3888"/>
</organismHost>
<organismHost>
    <name type="scientific">Solanum lycopersicum</name>
    <name type="common">Tomato</name>
    <name type="synonym">Lycopersicon esculentum</name>
    <dbReference type="NCBI Taxonomy" id="4081"/>
</organismHost>
<organismHost>
    <name type="scientific">Solanum tuberosum</name>
    <name type="common">Potato</name>
    <dbReference type="NCBI Taxonomy" id="4113"/>
</organismHost>
<organismHost>
    <name type="scientific">Teramnus repens</name>
    <dbReference type="NCBI Taxonomy" id="157662"/>
</organismHost>
<organismHost>
    <name type="scientific">Trifolium incarnatum</name>
    <name type="common">Crimson clover</name>
    <dbReference type="NCBI Taxonomy" id="60916"/>
</organismHost>
<organismHost>
    <name type="scientific">Viburnum opulus</name>
    <name type="common">High-bush cranberry</name>
    <dbReference type="NCBI Taxonomy" id="85293"/>
</organismHost>
<organismHost>
    <name type="scientific">Vigna radiata var. radiata</name>
    <name type="common">Mung bean</name>
    <name type="synonym">Phaseolus aureus</name>
    <dbReference type="NCBI Taxonomy" id="3916"/>
</organismHost>
<organismHost>
    <name type="scientific">Vigna unguiculata</name>
    <name type="common">Cowpea</name>
    <dbReference type="NCBI Taxonomy" id="3917"/>
</organismHost>
<protein>
    <recommendedName>
        <fullName>Capsid protein</fullName>
        <shortName>CP</shortName>
    </recommendedName>
    <alternativeName>
        <fullName>Coat protein</fullName>
    </alternativeName>
</protein>
<proteinExistence type="evidence at protein level"/>
<feature type="initiator methionine" description="Removed; by host" evidence="3">
    <location>
        <position position="1"/>
    </location>
</feature>
<feature type="chain" id="PRO_0000083191" description="Capsid protein">
    <location>
        <begin position="2"/>
        <end position="218"/>
    </location>
</feature>
<feature type="region of interest" description="Disordered" evidence="2">
    <location>
        <begin position="1"/>
        <end position="25"/>
    </location>
</feature>
<feature type="modified residue" description="N-acetylserine; by host" evidence="3">
    <location>
        <position position="2"/>
    </location>
</feature>
<feature type="sequence conflict" description="In Ref. 2; AA sequence." evidence="4" ref="2">
    <original>WQ</original>
    <variation>AV</variation>
    <location>
        <begin position="55"/>
        <end position="56"/>
    </location>
</feature>
<feature type="sequence conflict" description="In Ref. 2; AA sequence." evidence="4" ref="2">
    <original>N</original>
    <variation>D</variation>
    <location>
        <position position="68"/>
    </location>
</feature>
<feature type="sequence conflict" description="In Ref. 2; AA sequence." evidence="4" ref="2">
    <original>N</original>
    <variation>D</variation>
    <location>
        <position position="126"/>
    </location>
</feature>
<feature type="sequence conflict" description="In Ref. 2; AA sequence." evidence="4" ref="2">
    <original>Q</original>
    <variation>S</variation>
    <location>
        <position position="157"/>
    </location>
</feature>
<feature type="sequence conflict" description="In Ref. 2; AA sequence." evidence="4" ref="2">
    <original>Q</original>
    <variation>E</variation>
    <location>
        <position position="176"/>
    </location>
</feature>
<feature type="sequence conflict" description="In Ref. 2; AA sequence." evidence="4" ref="2">
    <original>N</original>
    <variation>D</variation>
    <location>
        <position position="182"/>
    </location>
</feature>
<feature type="sequence conflict" description="In Ref. 2; AA sequence." evidence="4" ref="2">
    <original>Y</original>
    <variation>F</variation>
    <location>
        <position position="185"/>
    </location>
</feature>
<sequence length="218" mass="23945">MSSSQKKAGGKAGKPTKRSQNYAALRKAQLPKPPALKVPVAKPTNTILPQTGCVWQSLGTPLSLSSFNGLGVRFLYSFLKDFTGPRILEEDLIYRMVFSITPSHAGTFCLTDDVTTEDGRAVAHGNPMQEFPHGAFHANEKFGFELVFTAPTHAGMQNQNFKHSYAVALCLDFDAQPEGSKNPSYRFNEVWVERKAFPRAGPLRSLITVGLLDEADDL</sequence>
<comment type="function">
    <text evidence="1">Capsid protein. Binds to the to the 3' end of the nonpolyadenylated viral RNA and is involved in viral RNA translation initiation. Probably binds RNA and plays a role in packaging (By similarity).</text>
</comment>
<comment type="subcellular location">
    <subcellularLocation>
        <location evidence="4">Virion</location>
    </subcellularLocation>
</comment>
<comment type="similarity">
    <text evidence="4">Belongs to the alphamovirus/ilarvirus capsid protein family.</text>
</comment>